<proteinExistence type="evidence at transcript level"/>
<accession>Q6WKZ0</accession>
<comment type="function">
    <text evidence="3">Cytochrome P450 oxygenase of undefined substrate. Not active with limonene, (+)- or (-)-piperitone, (-)-isopiperitone, piperitenone or (+)-pulegone.</text>
</comment>
<comment type="cofactor">
    <cofactor evidence="1">
        <name>heme</name>
        <dbReference type="ChEBI" id="CHEBI:30413"/>
    </cofactor>
</comment>
<comment type="subcellular location">
    <subcellularLocation>
        <location evidence="4">Endoplasmic reticulum membrane</location>
        <topology evidence="4">Single-pass type II membrane protein</topology>
    </subcellularLocation>
</comment>
<comment type="miscellaneous">
    <text>The Thr-300 residue involved in activation of molecular oxygen during the hydroxylation reaction is replaced by Ala-300, suggesting that this cytochrome P450 might utilize limonene hydroperoxide as a substrate to produce limonene epoxide.</text>
</comment>
<comment type="similarity">
    <text evidence="4">Belongs to the cytochrome P450 family.</text>
</comment>
<protein>
    <recommendedName>
        <fullName>Cytochrome P450 71D94</fullName>
    </recommendedName>
</protein>
<gene>
    <name type="primary">CYP71D94</name>
</gene>
<reference key="1">
    <citation type="journal article" date="2003" name="Phytochemistry">
        <title>Molecular evaluation of a spearmint mutant altered in the expression of limonene hydroxylases that direct essential oil monoterpene biosynthesis.</title>
        <authorList>
            <person name="Bertea C."/>
            <person name="Schalk M."/>
            <person name="Mau C.J.D."/>
            <person name="Karp F."/>
            <person name="Wildung M.R."/>
            <person name="Croteau R."/>
        </authorList>
    </citation>
    <scope>NUCLEOTIDE SEQUENCE [MRNA]</scope>
    <scope>FUNCTION</scope>
</reference>
<name>C7D94_MENGR</name>
<feature type="chain" id="PRO_0000389501" description="Cytochrome P450 71D94">
    <location>
        <begin position="1"/>
        <end position="494"/>
    </location>
</feature>
<feature type="transmembrane region" description="Helical; Signal-anchor for type II membrane protein" evidence="2">
    <location>
        <begin position="1"/>
        <end position="21"/>
    </location>
</feature>
<feature type="binding site" description="axial binding residue" evidence="1">
    <location>
        <position position="434"/>
    </location>
    <ligand>
        <name>heme</name>
        <dbReference type="ChEBI" id="CHEBI:30413"/>
    </ligand>
    <ligandPart>
        <name>Fe</name>
        <dbReference type="ChEBI" id="CHEBI:18248"/>
    </ligandPart>
</feature>
<evidence type="ECO:0000250" key="1"/>
<evidence type="ECO:0000255" key="2"/>
<evidence type="ECO:0000269" key="3">
    <source>
    </source>
</evidence>
<evidence type="ECO:0000305" key="4"/>
<sequence>MELNLLLVIIILVATYTVSLLNKQWRKPKSQQKQPPKLPVIGHLHLLWGGLPPQHLLRSIAREYGPVAHVQLGEVYSVVLSSAEAAKQAMKVLDPNFADRFDSVGSRIMWYDNDDIIFSPYNDHWHQMRKICVSELLSPKNVRSFGFIRQEEIERLIRVMKQSEGAPVDVTEEVSKMSCFVVCRAAFGSVLKDQGSLAELVKESLAMASGFELKDLYPSSWLLNLLSFNNYRLKRMRRRLDHVLDGFLEEHRVKKNGEFGGEDIVDVLFRMQKDSNIKIPITSNGIKGFIFNTFSAGAEASSTTISWALSELMRNPAKMAKVQAEVREALKGKTSVDLSEMQELKYMRSVVKETLRLHPPFPLIPRQSREECEINGFYIPARTRILINAWSIGRDPLYWEDPDTFRPERFDEVSRDFMGNDFEFIPFGAGQRICPGLHFGLANVEIPLAQLLYHFDWKLPQGMTDADLYVAGTPGLSGPRKKNVFLVPTIHKSR</sequence>
<keyword id="KW-0256">Endoplasmic reticulum</keyword>
<keyword id="KW-0349">Heme</keyword>
<keyword id="KW-0408">Iron</keyword>
<keyword id="KW-0472">Membrane</keyword>
<keyword id="KW-0479">Metal-binding</keyword>
<keyword id="KW-0503">Monooxygenase</keyword>
<keyword id="KW-0521">NADP</keyword>
<keyword id="KW-0560">Oxidoreductase</keyword>
<keyword id="KW-0735">Signal-anchor</keyword>
<keyword id="KW-0812">Transmembrane</keyword>
<keyword id="KW-1133">Transmembrane helix</keyword>
<dbReference type="EMBL" id="AY281026">
    <property type="protein sequence ID" value="AAQ18707.1"/>
    <property type="molecule type" value="mRNA"/>
</dbReference>
<dbReference type="SMR" id="Q6WKZ0"/>
<dbReference type="GO" id="GO:0005789">
    <property type="term" value="C:endoplasmic reticulum membrane"/>
    <property type="evidence" value="ECO:0007669"/>
    <property type="project" value="UniProtKB-SubCell"/>
</dbReference>
<dbReference type="GO" id="GO:0020037">
    <property type="term" value="F:heme binding"/>
    <property type="evidence" value="ECO:0007669"/>
    <property type="project" value="InterPro"/>
</dbReference>
<dbReference type="GO" id="GO:0005506">
    <property type="term" value="F:iron ion binding"/>
    <property type="evidence" value="ECO:0007669"/>
    <property type="project" value="InterPro"/>
</dbReference>
<dbReference type="GO" id="GO:0004497">
    <property type="term" value="F:monooxygenase activity"/>
    <property type="evidence" value="ECO:0007669"/>
    <property type="project" value="UniProtKB-KW"/>
</dbReference>
<dbReference type="GO" id="GO:0016705">
    <property type="term" value="F:oxidoreductase activity, acting on paired donors, with incorporation or reduction of molecular oxygen"/>
    <property type="evidence" value="ECO:0007669"/>
    <property type="project" value="InterPro"/>
</dbReference>
<dbReference type="CDD" id="cd11072">
    <property type="entry name" value="CYP71-like"/>
    <property type="match status" value="1"/>
</dbReference>
<dbReference type="FunFam" id="1.10.630.10:FF:000043">
    <property type="entry name" value="Cytochrome P450 99A2"/>
    <property type="match status" value="1"/>
</dbReference>
<dbReference type="Gene3D" id="1.10.630.10">
    <property type="entry name" value="Cytochrome P450"/>
    <property type="match status" value="1"/>
</dbReference>
<dbReference type="InterPro" id="IPR052306">
    <property type="entry name" value="CYP450_71D"/>
</dbReference>
<dbReference type="InterPro" id="IPR001128">
    <property type="entry name" value="Cyt_P450"/>
</dbReference>
<dbReference type="InterPro" id="IPR017972">
    <property type="entry name" value="Cyt_P450_CS"/>
</dbReference>
<dbReference type="InterPro" id="IPR002401">
    <property type="entry name" value="Cyt_P450_E_grp-I"/>
</dbReference>
<dbReference type="InterPro" id="IPR036396">
    <property type="entry name" value="Cyt_P450_sf"/>
</dbReference>
<dbReference type="PANTHER" id="PTHR47953:SF19">
    <property type="entry name" value="OS06G0641600 PROTEIN"/>
    <property type="match status" value="1"/>
</dbReference>
<dbReference type="PANTHER" id="PTHR47953">
    <property type="entry name" value="OS08G0105600 PROTEIN"/>
    <property type="match status" value="1"/>
</dbReference>
<dbReference type="Pfam" id="PF00067">
    <property type="entry name" value="p450"/>
    <property type="match status" value="1"/>
</dbReference>
<dbReference type="PRINTS" id="PR00463">
    <property type="entry name" value="EP450I"/>
</dbReference>
<dbReference type="PRINTS" id="PR00385">
    <property type="entry name" value="P450"/>
</dbReference>
<dbReference type="SUPFAM" id="SSF48264">
    <property type="entry name" value="Cytochrome P450"/>
    <property type="match status" value="1"/>
</dbReference>
<dbReference type="PROSITE" id="PS00086">
    <property type="entry name" value="CYTOCHROME_P450"/>
    <property type="match status" value="1"/>
</dbReference>
<organism>
    <name type="scientific">Mentha gracilis</name>
    <name type="common">Gingermint</name>
    <dbReference type="NCBI Taxonomy" id="241069"/>
    <lineage>
        <taxon>Eukaryota</taxon>
        <taxon>Viridiplantae</taxon>
        <taxon>Streptophyta</taxon>
        <taxon>Embryophyta</taxon>
        <taxon>Tracheophyta</taxon>
        <taxon>Spermatophyta</taxon>
        <taxon>Magnoliopsida</taxon>
        <taxon>eudicotyledons</taxon>
        <taxon>Gunneridae</taxon>
        <taxon>Pentapetalae</taxon>
        <taxon>asterids</taxon>
        <taxon>lamiids</taxon>
        <taxon>Lamiales</taxon>
        <taxon>Lamiaceae</taxon>
        <taxon>Nepetoideae</taxon>
        <taxon>Mentheae</taxon>
        <taxon>Menthinae</taxon>
        <taxon>Mentha</taxon>
    </lineage>
</organism>